<evidence type="ECO:0000250" key="1">
    <source>
        <dbReference type="UniProtKB" id="Q4WZB3"/>
    </source>
</evidence>
<evidence type="ECO:0000250" key="2">
    <source>
        <dbReference type="UniProtKB" id="Q93NG6"/>
    </source>
</evidence>
<evidence type="ECO:0000269" key="3">
    <source>
    </source>
</evidence>
<evidence type="ECO:0000269" key="4">
    <source>
    </source>
</evidence>
<evidence type="ECO:0000269" key="5">
    <source>
    </source>
</evidence>
<evidence type="ECO:0000303" key="6">
    <source>
    </source>
</evidence>
<evidence type="ECO:0000305" key="7"/>
<evidence type="ECO:0000305" key="8">
    <source>
    </source>
</evidence>
<evidence type="ECO:0000305" key="9">
    <source>
    </source>
</evidence>
<keyword id="KW-0378">Hydrolase</keyword>
<keyword id="KW-1185">Reference proteome</keyword>
<protein>
    <recommendedName>
        <fullName evidence="6">Alpha/beta hydrolase psoB</fullName>
        <ecNumber evidence="9">3.7.1.-</ecNumber>
    </recommendedName>
    <alternativeName>
        <fullName evidence="6">Pseurotin biosynthesis protein B</fullName>
    </alternativeName>
</protein>
<sequence>MATIHKLFKSPFFDFEFLRLLAMAPYEGAEIGEVLEAAAKIKDQDPESWYSTLLETGGKAEAIAKQAEASGDRVGARRAYLRSSNYLRAAQFMLNEGPIGHDERVLPTLERAIANFRKGVQYRDGKTIFLEIPYEGGKTLPGYLYLPPAARRIPGRKIPILLNSGGGDSTQEEIYFVNPAYGPDLGYAVLTFEGPGQGIVLRRDKLPMRPDWESVTGPVLDHLFDLATRHPELELDLDHIAVTGASMGGYFALRAAADPRIKACVSVDGFYSLSSFVGGRMPGPLFNGFMSGWLSDWMFNGILGVLKKLAFQARWEFNHLRWATGSTTDADVMRSFGAYTLQKADGTEYLADVKCPTLVTGAGASFYFDPATTTDKIYDCLTSLQDGVDKEKWIATDVAYGGLQAKIGAFGYSAQKTFEWLDQRFGIQREPLAASSRLEDLVSRL</sequence>
<comment type="function">
    <text evidence="4 5">Alpha/beta hydrolase; part of the gene cluster that mediates the biosynthesis of pseurotin A, a competitive inhibitor of chitin synthase and an inducer of nerve-cell proliferation (PubMed:24082142, PubMed:24939566). The PKS-NRPS hybrid synthetase psoA is responsible for the biosynthesis of azaspirene, one of the first intermediates having the 1-oxa-7-azaspiro[4,4]-non-2-ene-4,6-dione core of pseurotin, via condensation of one acetyl-CoA, 4 malonyl-CoA, and a L-phenylalanine molecule (PubMed:24082142, PubMed:24939566). The dual-functional monooxygenase/methyltransferase psoF seems to be involved in the addition of the C3 methyl group onto the pseurotin scaffold (PubMed:24939566). Azaspirene is then converted to synerazol through 4 steps including oxidation of C17 by the cytochrome P450 monooxygenase psoD, O-methylation of the hydroxy group of C8 by the methyltransferase psoC, and the trans-to-cis isomerization of the C13 olefin by the glutathione S-transferase psoE (PubMed:24939566). The fourth step of synerazol production is performed by the dual-functional monooxygenase/methyltransferase psoF which seems to catalyze the epoxidation of the intermediate deepoxy-synerazol (PubMed:24939566). Synerazol can be attacked by a water molecule nonenzymatically at two different positions to yield two diol products, pseurotin A and pseurotin D (PubMed:24939566).</text>
</comment>
<comment type="pathway">
    <text evidence="8">Secondary metabolite biosynthesis.</text>
</comment>
<comment type="subunit">
    <text evidence="2">Homodimer.</text>
</comment>
<comment type="induction">
    <text evidence="3">Expression is induced under hypoxic conditions (PubMed:21388144).</text>
</comment>
<comment type="disruption phenotype">
    <text evidence="4">Results in significant reduction of pseurotin production (PubMed:24082142).</text>
</comment>
<comment type="similarity">
    <text evidence="7">Belongs to the AB hydrolase superfamily. FUS2 hydrolase family.</text>
</comment>
<name>PSOB_ASPFU</name>
<reference key="1">
    <citation type="journal article" date="2005" name="Nature">
        <title>Genomic sequence of the pathogenic and allergenic filamentous fungus Aspergillus fumigatus.</title>
        <authorList>
            <person name="Nierman W.C."/>
            <person name="Pain A."/>
            <person name="Anderson M.J."/>
            <person name="Wortman J.R."/>
            <person name="Kim H.S."/>
            <person name="Arroyo J."/>
            <person name="Berriman M."/>
            <person name="Abe K."/>
            <person name="Archer D.B."/>
            <person name="Bermejo C."/>
            <person name="Bennett J.W."/>
            <person name="Bowyer P."/>
            <person name="Chen D."/>
            <person name="Collins M."/>
            <person name="Coulsen R."/>
            <person name="Davies R."/>
            <person name="Dyer P.S."/>
            <person name="Farman M.L."/>
            <person name="Fedorova N."/>
            <person name="Fedorova N.D."/>
            <person name="Feldblyum T.V."/>
            <person name="Fischer R."/>
            <person name="Fosker N."/>
            <person name="Fraser A."/>
            <person name="Garcia J.L."/>
            <person name="Garcia M.J."/>
            <person name="Goble A."/>
            <person name="Goldman G.H."/>
            <person name="Gomi K."/>
            <person name="Griffith-Jones S."/>
            <person name="Gwilliam R."/>
            <person name="Haas B.J."/>
            <person name="Haas H."/>
            <person name="Harris D.E."/>
            <person name="Horiuchi H."/>
            <person name="Huang J."/>
            <person name="Humphray S."/>
            <person name="Jimenez J."/>
            <person name="Keller N."/>
            <person name="Khouri H."/>
            <person name="Kitamoto K."/>
            <person name="Kobayashi T."/>
            <person name="Konzack S."/>
            <person name="Kulkarni R."/>
            <person name="Kumagai T."/>
            <person name="Lafton A."/>
            <person name="Latge J.-P."/>
            <person name="Li W."/>
            <person name="Lord A."/>
            <person name="Lu C."/>
            <person name="Majoros W.H."/>
            <person name="May G.S."/>
            <person name="Miller B.L."/>
            <person name="Mohamoud Y."/>
            <person name="Molina M."/>
            <person name="Monod M."/>
            <person name="Mouyna I."/>
            <person name="Mulligan S."/>
            <person name="Murphy L.D."/>
            <person name="O'Neil S."/>
            <person name="Paulsen I."/>
            <person name="Penalva M.A."/>
            <person name="Pertea M."/>
            <person name="Price C."/>
            <person name="Pritchard B.L."/>
            <person name="Quail M.A."/>
            <person name="Rabbinowitsch E."/>
            <person name="Rawlins N."/>
            <person name="Rajandream M.A."/>
            <person name="Reichard U."/>
            <person name="Renauld H."/>
            <person name="Robson G.D."/>
            <person name="Rodriguez de Cordoba S."/>
            <person name="Rodriguez-Pena J.M."/>
            <person name="Ronning C.M."/>
            <person name="Rutter S."/>
            <person name="Salzberg S.L."/>
            <person name="Sanchez M."/>
            <person name="Sanchez-Ferrero J.C."/>
            <person name="Saunders D."/>
            <person name="Seeger K."/>
            <person name="Squares R."/>
            <person name="Squares S."/>
            <person name="Takeuchi M."/>
            <person name="Tekaia F."/>
            <person name="Turner G."/>
            <person name="Vazquez de Aldana C.R."/>
            <person name="Weidman J."/>
            <person name="White O."/>
            <person name="Woodward J.R."/>
            <person name="Yu J.-H."/>
            <person name="Fraser C.M."/>
            <person name="Galagan J.E."/>
            <person name="Asai K."/>
            <person name="Machida M."/>
            <person name="Hall N."/>
            <person name="Barrell B.G."/>
            <person name="Denning D.W."/>
        </authorList>
    </citation>
    <scope>NUCLEOTIDE SEQUENCE [LARGE SCALE GENOMIC DNA]</scope>
    <source>
        <strain>ATCC MYA-4609 / CBS 101355 / FGSC A1100 / Af293</strain>
    </source>
</reference>
<reference key="2">
    <citation type="journal article" date="2011" name="J. Proteome Res.">
        <title>Analysis of the Aspergillus fumigatus proteome reveals metabolic changes and the activation of the pseurotin A biosynthesis gene cluster in response to hypoxia.</title>
        <authorList>
            <person name="Voedisch M."/>
            <person name="Scherlach K."/>
            <person name="Winkler R."/>
            <person name="Hertweck C."/>
            <person name="Braun H.P."/>
            <person name="Roth M."/>
            <person name="Haas H."/>
            <person name="Werner E.R."/>
            <person name="Brakhage A.A."/>
            <person name="Kniemeyer O."/>
        </authorList>
    </citation>
    <scope>INDUCTION</scope>
</reference>
<reference key="3">
    <citation type="journal article" date="2013" name="Proc. Natl. Acad. Sci. U.S.A.">
        <title>Prototype of an intertwined secondary-metabolite supercluster.</title>
        <authorList>
            <person name="Wiemann P."/>
            <person name="Guo C.J."/>
            <person name="Palmer J.M."/>
            <person name="Sekonyela R."/>
            <person name="Wang C.C."/>
            <person name="Keller N.P."/>
        </authorList>
    </citation>
    <scope>FUNCTION</scope>
    <scope>DISRUPTION PHENOTYPE</scope>
</reference>
<reference key="4">
    <citation type="journal article" date="2014" name="Angew. Chem. Int. Ed.">
        <title>Elucidation of pseurotin biosynthetic pathway points to trans-acting C-methyltransferase: generation of chemical diversity.</title>
        <authorList>
            <person name="Tsunematsu Y."/>
            <person name="Fukutomi M."/>
            <person name="Saruwatari T."/>
            <person name="Noguchi H."/>
            <person name="Hotta K."/>
            <person name="Tang Y."/>
            <person name="Watanabe K."/>
        </authorList>
    </citation>
    <scope>FUNCTION</scope>
</reference>
<accession>Q4WAZ8</accession>
<organism>
    <name type="scientific">Aspergillus fumigatus (strain ATCC MYA-4609 / CBS 101355 / FGSC A1100 / Af293)</name>
    <name type="common">Neosartorya fumigata</name>
    <dbReference type="NCBI Taxonomy" id="330879"/>
    <lineage>
        <taxon>Eukaryota</taxon>
        <taxon>Fungi</taxon>
        <taxon>Dikarya</taxon>
        <taxon>Ascomycota</taxon>
        <taxon>Pezizomycotina</taxon>
        <taxon>Eurotiomycetes</taxon>
        <taxon>Eurotiomycetidae</taxon>
        <taxon>Eurotiales</taxon>
        <taxon>Aspergillaceae</taxon>
        <taxon>Aspergillus</taxon>
        <taxon>Aspergillus subgen. Fumigati</taxon>
    </lineage>
</organism>
<proteinExistence type="evidence at transcript level"/>
<gene>
    <name evidence="6" type="primary">psoB</name>
    <name type="ORF">AFUA_8G00530</name>
</gene>
<dbReference type="EC" id="3.7.1.-" evidence="9"/>
<dbReference type="EMBL" id="AAHF01000014">
    <property type="protein sequence ID" value="EAL85114.1"/>
    <property type="molecule type" value="Genomic_DNA"/>
</dbReference>
<dbReference type="RefSeq" id="XP_747152.1">
    <property type="nucleotide sequence ID" value="XM_742059.1"/>
</dbReference>
<dbReference type="SMR" id="Q4WAZ8"/>
<dbReference type="ESTHER" id="aspfu-psoB">
    <property type="family name" value="Duf_1100-S"/>
</dbReference>
<dbReference type="EnsemblFungi" id="EAL85114">
    <property type="protein sequence ID" value="EAL85114"/>
    <property type="gene ID" value="AFUA_8G00530"/>
</dbReference>
<dbReference type="GeneID" id="3504511"/>
<dbReference type="KEGG" id="afm:AFUA_8G00530"/>
<dbReference type="VEuPathDB" id="FungiDB:Afu8g00530"/>
<dbReference type="eggNOG" id="ENOG502QPTG">
    <property type="taxonomic scope" value="Eukaryota"/>
</dbReference>
<dbReference type="HOGENOM" id="CLU_034451_0_0_1"/>
<dbReference type="InParanoid" id="Q4WAZ8"/>
<dbReference type="OMA" id="SMGAYYS"/>
<dbReference type="OrthoDB" id="249703at2759"/>
<dbReference type="Proteomes" id="UP000002530">
    <property type="component" value="Chromosome 8"/>
</dbReference>
<dbReference type="GO" id="GO:0016787">
    <property type="term" value="F:hydrolase activity"/>
    <property type="evidence" value="ECO:0000318"/>
    <property type="project" value="GO_Central"/>
</dbReference>
<dbReference type="GO" id="GO:0042438">
    <property type="term" value="P:melanin biosynthetic process"/>
    <property type="evidence" value="ECO:0000318"/>
    <property type="project" value="GO_Central"/>
</dbReference>
<dbReference type="Gene3D" id="1.20.1440.110">
    <property type="entry name" value="acylaminoacyl peptidase"/>
    <property type="match status" value="1"/>
</dbReference>
<dbReference type="Gene3D" id="3.40.50.1820">
    <property type="entry name" value="alpha/beta hydrolase"/>
    <property type="match status" value="1"/>
</dbReference>
<dbReference type="InterPro" id="IPR000073">
    <property type="entry name" value="AB_hydrolase_1"/>
</dbReference>
<dbReference type="InterPro" id="IPR029058">
    <property type="entry name" value="AB_hydrolase_fold"/>
</dbReference>
<dbReference type="InterPro" id="IPR050261">
    <property type="entry name" value="FrsA_esterase"/>
</dbReference>
<dbReference type="PANTHER" id="PTHR22946:SF13">
    <property type="entry name" value="ALPHA_BETA HYDROLASE PSOB"/>
    <property type="match status" value="1"/>
</dbReference>
<dbReference type="PANTHER" id="PTHR22946">
    <property type="entry name" value="DIENELACTONE HYDROLASE DOMAIN-CONTAINING PROTEIN-RELATED"/>
    <property type="match status" value="1"/>
</dbReference>
<dbReference type="Pfam" id="PF12697">
    <property type="entry name" value="Abhydrolase_6"/>
    <property type="match status" value="1"/>
</dbReference>
<dbReference type="SUPFAM" id="SSF53474">
    <property type="entry name" value="alpha/beta-Hydrolases"/>
    <property type="match status" value="1"/>
</dbReference>
<feature type="chain" id="PRO_0000438196" description="Alpha/beta hydrolase psoB">
    <location>
        <begin position="1"/>
        <end position="445"/>
    </location>
</feature>
<feature type="active site" description="Nucleophile" evidence="1">
    <location>
        <position position="246"/>
    </location>
</feature>